<keyword id="KW-0002">3D-structure</keyword>
<keyword id="KW-1003">Cell membrane</keyword>
<keyword id="KW-1015">Disulfide bond</keyword>
<keyword id="KW-0325">Glycoprotein</keyword>
<keyword id="KW-0393">Immunoglobulin domain</keyword>
<keyword id="KW-0472">Membrane</keyword>
<keyword id="KW-1267">Proteomics identification</keyword>
<keyword id="KW-1185">Reference proteome</keyword>
<keyword id="KW-0677">Repeat</keyword>
<keyword id="KW-0732">Signal</keyword>
<keyword id="KW-0812">Transmembrane</keyword>
<keyword id="KW-1133">Transmembrane helix</keyword>
<evidence type="ECO:0000255" key="1"/>
<evidence type="ECO:0000255" key="2">
    <source>
        <dbReference type="PROSITE-ProRule" id="PRU00114"/>
    </source>
</evidence>
<evidence type="ECO:0000256" key="3">
    <source>
        <dbReference type="SAM" id="MobiDB-lite"/>
    </source>
</evidence>
<evidence type="ECO:0000269" key="4">
    <source>
    </source>
</evidence>
<evidence type="ECO:0000269" key="5">
    <source>
    </source>
</evidence>
<evidence type="ECO:0000305" key="6"/>
<evidence type="ECO:0007829" key="7">
    <source>
        <dbReference type="PDB" id="3PV6"/>
    </source>
</evidence>
<evidence type="ECO:0007829" key="8">
    <source>
        <dbReference type="PDB" id="3PV7"/>
    </source>
</evidence>
<evidence type="ECO:0007829" key="9">
    <source>
        <dbReference type="PDB" id="4ZSO"/>
    </source>
</evidence>
<evidence type="ECO:0007829" key="10">
    <source>
        <dbReference type="PDB" id="6YJP"/>
    </source>
</evidence>
<name>NR3L1_HUMAN</name>
<comment type="function">
    <text evidence="4">Triggers NCR3-dependent natural killer cell activation.</text>
</comment>
<comment type="subunit">
    <text evidence="4 5">Monomer. Interacts specifically with NCR3, but not with other natural killer cell-activating receptors, including NCR1, NCR2 and KLRK1.</text>
</comment>
<comment type="interaction">
    <interactant intactId="EBI-14061804">
        <id>Q68D85</id>
    </interactant>
    <interactant intactId="EBI-12211159">
        <id>P29400-2</id>
        <label>COL4A5</label>
    </interactant>
    <organismsDiffer>false</organismsDiffer>
    <experiments>3</experiments>
</comment>
<comment type="interaction">
    <interactant intactId="EBI-14061804">
        <id>Q68D85</id>
    </interactant>
    <interactant intactId="EBI-711490">
        <id>Q9UKR5</id>
        <label>ERG28</label>
    </interactant>
    <organismsDiffer>false</organismsDiffer>
    <experiments>3</experiments>
</comment>
<comment type="interaction">
    <interactant intactId="EBI-14061804">
        <id>Q68D85</id>
    </interactant>
    <interactant intactId="EBI-14989262">
        <id>O14931</id>
        <label>NCR3</label>
    </interactant>
    <organismsDiffer>false</organismsDiffer>
    <experiments>16</experiments>
</comment>
<comment type="interaction">
    <interactant intactId="EBI-14061804">
        <id>Q68D85</id>
    </interactant>
    <interactant intactId="EBI-12051377">
        <id>Q8N912</id>
        <label>NRAC</label>
    </interactant>
    <organismsDiffer>false</organismsDiffer>
    <experiments>3</experiments>
</comment>
<comment type="interaction">
    <interactant intactId="EBI-14061804">
        <id>Q68D85</id>
    </interactant>
    <interactant intactId="EBI-11721828">
        <id>Q8IY26</id>
        <label>PLPP6</label>
    </interactant>
    <organismsDiffer>false</organismsDiffer>
    <experiments>3</experiments>
</comment>
<comment type="interaction">
    <interactant intactId="EBI-14061804">
        <id>Q68D85</id>
    </interactant>
    <interactant intactId="EBI-727240">
        <id>Q9UNK0</id>
        <label>STX8</label>
    </interactant>
    <organismsDiffer>false</organismsDiffer>
    <experiments>3</experiments>
</comment>
<comment type="interaction">
    <interactant intactId="EBI-14061804">
        <id>Q68D85</id>
    </interactant>
    <interactant intactId="EBI-2339195">
        <id>Q9P0S9</id>
        <label>TMEM14C</label>
    </interactant>
    <organismsDiffer>false</organismsDiffer>
    <experiments>3</experiments>
</comment>
<comment type="interaction">
    <interactant intactId="EBI-14061804">
        <id>Q68D85</id>
    </interactant>
    <interactant intactId="EBI-347385">
        <id>Q9H0R3</id>
        <label>TMEM222</label>
    </interactant>
    <organismsDiffer>false</organismsDiffer>
    <experiments>3</experiments>
</comment>
<comment type="interaction">
    <interactant intactId="EBI-14061804">
        <id>Q68D85</id>
    </interactant>
    <interactant intactId="EBI-6623146">
        <id>P30536</id>
        <label>TSPO</label>
    </interactant>
    <organismsDiffer>false</organismsDiffer>
    <experiments>3</experiments>
</comment>
<comment type="interaction">
    <interactant intactId="EBI-14061804">
        <id>Q68D85</id>
    </interactant>
    <interactant intactId="EBI-10243654">
        <id>Q5BVD1</id>
        <label>TTMP</label>
    </interactant>
    <organismsDiffer>false</organismsDiffer>
    <experiments>3</experiments>
</comment>
<comment type="subcellular location">
    <subcellularLocation>
        <location evidence="4">Cell membrane</location>
        <topology evidence="4">Single-pass type I membrane protein</topology>
    </subcellularLocation>
</comment>
<comment type="tissue specificity">
    <text evidence="4">Not detected in any normal tissue tested. Expressed at the surface of several tumor cell lines including T and B-lymphomas, myeloid leukemias, melanomas, carcinomas and large T SV40 antigen-transformed cells (at protein level).</text>
</comment>
<comment type="domain">
    <text>The C-terminal part is similar to retroviral Gag protein. This putative protein seems to be the result of a fusion between an Ig-like domain-containing protein and a ERV.</text>
</comment>
<comment type="sequence caution" evidence="6">
    <conflict type="erroneous initiation">
        <sequence resource="EMBL-CDS" id="CAD97811"/>
    </conflict>
    <text>Extended N-terminus.</text>
</comment>
<gene>
    <name type="primary">NCR3LG1</name>
    <name type="synonym">B7H6</name>
</gene>
<organism>
    <name type="scientific">Homo sapiens</name>
    <name type="common">Human</name>
    <dbReference type="NCBI Taxonomy" id="9606"/>
    <lineage>
        <taxon>Eukaryota</taxon>
        <taxon>Metazoa</taxon>
        <taxon>Chordata</taxon>
        <taxon>Craniata</taxon>
        <taxon>Vertebrata</taxon>
        <taxon>Euteleostomi</taxon>
        <taxon>Mammalia</taxon>
        <taxon>Eutheria</taxon>
        <taxon>Euarchontoglires</taxon>
        <taxon>Primates</taxon>
        <taxon>Haplorrhini</taxon>
        <taxon>Catarrhini</taxon>
        <taxon>Hominidae</taxon>
        <taxon>Homo</taxon>
    </lineage>
</organism>
<reference key="1">
    <citation type="journal article" date="2007" name="BMC Genomics">
        <title>The full-ORF clone resource of the German cDNA consortium.</title>
        <authorList>
            <person name="Bechtel S."/>
            <person name="Rosenfelder H."/>
            <person name="Duda A."/>
            <person name="Schmidt C.P."/>
            <person name="Ernst U."/>
            <person name="Wellenreuther R."/>
            <person name="Mehrle A."/>
            <person name="Schuster C."/>
            <person name="Bahr A."/>
            <person name="Bloecker H."/>
            <person name="Heubner D."/>
            <person name="Hoerlein A."/>
            <person name="Michel G."/>
            <person name="Wedler H."/>
            <person name="Koehrer K."/>
            <person name="Ottenwaelder B."/>
            <person name="Poustka A."/>
            <person name="Wiemann S."/>
            <person name="Schupp I."/>
        </authorList>
    </citation>
    <scope>NUCLEOTIDE SEQUENCE [LARGE SCALE MRNA]</scope>
    <source>
        <tissue>Uterine endothelium</tissue>
    </source>
</reference>
<reference key="2">
    <citation type="journal article" date="2006" name="Nature">
        <title>Human chromosome 11 DNA sequence and analysis including novel gene identification.</title>
        <authorList>
            <person name="Taylor T.D."/>
            <person name="Noguchi H."/>
            <person name="Totoki Y."/>
            <person name="Toyoda A."/>
            <person name="Kuroki Y."/>
            <person name="Dewar K."/>
            <person name="Lloyd C."/>
            <person name="Itoh T."/>
            <person name="Takeda T."/>
            <person name="Kim D.-W."/>
            <person name="She X."/>
            <person name="Barlow K.F."/>
            <person name="Bloom T."/>
            <person name="Bruford E."/>
            <person name="Chang J.L."/>
            <person name="Cuomo C.A."/>
            <person name="Eichler E."/>
            <person name="FitzGerald M.G."/>
            <person name="Jaffe D.B."/>
            <person name="LaButti K."/>
            <person name="Nicol R."/>
            <person name="Park H.-S."/>
            <person name="Seaman C."/>
            <person name="Sougnez C."/>
            <person name="Yang X."/>
            <person name="Zimmer A.R."/>
            <person name="Zody M.C."/>
            <person name="Birren B.W."/>
            <person name="Nusbaum C."/>
            <person name="Fujiyama A."/>
            <person name="Hattori M."/>
            <person name="Rogers J."/>
            <person name="Lander E.S."/>
            <person name="Sakaki Y."/>
        </authorList>
    </citation>
    <scope>NUCLEOTIDE SEQUENCE [LARGE SCALE GENOMIC DNA]</scope>
</reference>
<reference key="3">
    <citation type="journal article" date="2004" name="Genome Res.">
        <title>The status, quality, and expansion of the NIH full-length cDNA project: the Mammalian Gene Collection (MGC).</title>
        <authorList>
            <consortium name="The MGC Project Team"/>
        </authorList>
    </citation>
    <scope>NUCLEOTIDE SEQUENCE [LARGE SCALE MRNA]</scope>
    <source>
        <tissue>Cerebellum</tissue>
    </source>
</reference>
<reference key="4">
    <citation type="journal article" date="2009" name="J. Exp. Med.">
        <title>The B7 family member B7-H6 is a tumor cell ligand for the activating natural killer cell receptor NKp30 in humans.</title>
        <authorList>
            <person name="Brandt C.S."/>
            <person name="Baratin M."/>
            <person name="Yi E.C."/>
            <person name="Kennedy J."/>
            <person name="Gao Z."/>
            <person name="Fox B."/>
            <person name="Haldeman B."/>
            <person name="Ostrander C.D."/>
            <person name="Kaifu T."/>
            <person name="Chabannon C."/>
            <person name="Moretta A."/>
            <person name="West R."/>
            <person name="Xu W."/>
            <person name="Vivier E."/>
            <person name="Levin S.D."/>
        </authorList>
    </citation>
    <scope>FUNCTION</scope>
    <scope>INTERACTION WITH NCR3</scope>
    <scope>SUBCELLULAR LOCATION</scope>
    <scope>TISSUE SPECIFICITY</scope>
</reference>
<reference key="5">
    <citation type="journal article" date="2011" name="J. Exp. Med.">
        <title>Structure of the human activating natural cytotoxicity receptor NKp30 bound to its tumor cell ligand B7-H6.</title>
        <authorList>
            <person name="Li Y."/>
            <person name="Wang Q."/>
            <person name="Mariuzza R.A."/>
        </authorList>
    </citation>
    <scope>X-RAY CRYSTALLOGRAPHY (2.0 ANGSTROMS) OF 25-262 ALONE AND IN COMPLEX WITH NCR3</scope>
    <scope>GLYCOSYLATION AT ASN-43; ASN-57; ASN-208 AND ASN-242</scope>
    <scope>SUBUNIT</scope>
    <scope>DISULFIDE BONDS</scope>
</reference>
<protein>
    <recommendedName>
        <fullName>Natural cytotoxicity triggering receptor 3 ligand 1</fullName>
    </recommendedName>
    <alternativeName>
        <fullName>B7 homolog 6</fullName>
        <shortName>B7-H6</shortName>
    </alternativeName>
</protein>
<dbReference type="EMBL" id="BX537685">
    <property type="protein sequence ID" value="CAD97811.1"/>
    <property type="status" value="ALT_INIT"/>
    <property type="molecule type" value="mRNA"/>
</dbReference>
<dbReference type="EMBL" id="CR749521">
    <property type="protein sequence ID" value="CAH18335.1"/>
    <property type="molecule type" value="mRNA"/>
</dbReference>
<dbReference type="EMBL" id="AC124798">
    <property type="status" value="NOT_ANNOTATED_CDS"/>
    <property type="molecule type" value="Genomic_DNA"/>
</dbReference>
<dbReference type="EMBL" id="BC136800">
    <property type="status" value="NOT_ANNOTATED_CDS"/>
    <property type="molecule type" value="mRNA"/>
</dbReference>
<dbReference type="EMBL" id="BC136797">
    <property type="status" value="NOT_ANNOTATED_CDS"/>
    <property type="molecule type" value="mRNA"/>
</dbReference>
<dbReference type="CCDS" id="CCDS55748.1"/>
<dbReference type="RefSeq" id="NP_001189368.1">
    <property type="nucleotide sequence ID" value="NM_001202439.3"/>
</dbReference>
<dbReference type="RefSeq" id="XP_047282862.1">
    <property type="nucleotide sequence ID" value="XM_047426906.1"/>
</dbReference>
<dbReference type="PDB" id="3PV6">
    <property type="method" value="X-ray"/>
    <property type="resolution" value="2.30 A"/>
    <property type="chains" value="A=25-262"/>
</dbReference>
<dbReference type="PDB" id="3PV7">
    <property type="method" value="X-ray"/>
    <property type="resolution" value="2.00 A"/>
    <property type="chains" value="A=25-262"/>
</dbReference>
<dbReference type="PDB" id="4ZSO">
    <property type="method" value="X-ray"/>
    <property type="resolution" value="2.50 A"/>
    <property type="chains" value="E/F=25-262"/>
</dbReference>
<dbReference type="PDB" id="6YJP">
    <property type="method" value="X-ray"/>
    <property type="resolution" value="3.10 A"/>
    <property type="chains" value="C/D/E=24-244"/>
</dbReference>
<dbReference type="PDBsum" id="3PV6"/>
<dbReference type="PDBsum" id="3PV7"/>
<dbReference type="PDBsum" id="4ZSO"/>
<dbReference type="PDBsum" id="6YJP"/>
<dbReference type="SMR" id="Q68D85"/>
<dbReference type="BioGRID" id="131895">
    <property type="interactions" value="76"/>
</dbReference>
<dbReference type="DIP" id="DIP-59940N"/>
<dbReference type="FunCoup" id="Q68D85">
    <property type="interactions" value="413"/>
</dbReference>
<dbReference type="IntAct" id="Q68D85">
    <property type="interactions" value="61"/>
</dbReference>
<dbReference type="STRING" id="9606.ENSP00000341637"/>
<dbReference type="GlyConnect" id="642">
    <property type="glycosylation" value="2 N-Linked glycans (2 sites)"/>
</dbReference>
<dbReference type="GlyCosmos" id="Q68D85">
    <property type="glycosylation" value="7 sites, 3 glycans"/>
</dbReference>
<dbReference type="GlyGen" id="Q68D85">
    <property type="glycosylation" value="9 sites, 6 N-linked glycans (4 sites), 1 O-linked glycan (1 site)"/>
</dbReference>
<dbReference type="iPTMnet" id="Q68D85"/>
<dbReference type="PhosphoSitePlus" id="Q68D85"/>
<dbReference type="SwissPalm" id="Q68D85"/>
<dbReference type="BioMuta" id="NCR3LG1"/>
<dbReference type="DMDM" id="74708829"/>
<dbReference type="jPOST" id="Q68D85"/>
<dbReference type="MassIVE" id="Q68D85"/>
<dbReference type="PaxDb" id="9606-ENSP00000341637"/>
<dbReference type="PeptideAtlas" id="Q68D85"/>
<dbReference type="ProteomicsDB" id="66058"/>
<dbReference type="Pumba" id="Q68D85"/>
<dbReference type="ABCD" id="Q68D85">
    <property type="antibodies" value="1 sequenced antibody"/>
</dbReference>
<dbReference type="Antibodypedia" id="6152">
    <property type="antibodies" value="409 antibodies from 23 providers"/>
</dbReference>
<dbReference type="DNASU" id="374383"/>
<dbReference type="Ensembl" id="ENST00000338965.9">
    <property type="protein sequence ID" value="ENSP00000341637.4"/>
    <property type="gene ID" value="ENSG00000188211.9"/>
</dbReference>
<dbReference type="Ensembl" id="ENST00000530403.1">
    <property type="protein sequence ID" value="ENSP00000434394.1"/>
    <property type="gene ID" value="ENSG00000188211.9"/>
</dbReference>
<dbReference type="GeneID" id="374383"/>
<dbReference type="KEGG" id="hsa:374383"/>
<dbReference type="MANE-Select" id="ENST00000338965.9">
    <property type="protein sequence ID" value="ENSP00000341637.4"/>
    <property type="RefSeq nucleotide sequence ID" value="NM_001202439.3"/>
    <property type="RefSeq protein sequence ID" value="NP_001189368.1"/>
</dbReference>
<dbReference type="UCSC" id="uc001mmz.5">
    <property type="organism name" value="human"/>
</dbReference>
<dbReference type="AGR" id="HGNC:42400"/>
<dbReference type="CTD" id="374383"/>
<dbReference type="DisGeNET" id="374383"/>
<dbReference type="GeneCards" id="NCR3LG1"/>
<dbReference type="HGNC" id="HGNC:42400">
    <property type="gene designation" value="NCR3LG1"/>
</dbReference>
<dbReference type="HPA" id="ENSG00000188211">
    <property type="expression patterns" value="Tissue enhanced (brain, parathyroid gland)"/>
</dbReference>
<dbReference type="MIM" id="613714">
    <property type="type" value="gene"/>
</dbReference>
<dbReference type="neXtProt" id="NX_Q68D85"/>
<dbReference type="OpenTargets" id="ENSG00000188211"/>
<dbReference type="VEuPathDB" id="HostDB:ENSG00000188211"/>
<dbReference type="eggNOG" id="KOG3866">
    <property type="taxonomic scope" value="Eukaryota"/>
</dbReference>
<dbReference type="GeneTree" id="ENSGT00940000163348"/>
<dbReference type="HOGENOM" id="CLU_602620_0_0_1"/>
<dbReference type="InParanoid" id="Q68D85"/>
<dbReference type="OMA" id="GKYMCES"/>
<dbReference type="OrthoDB" id="9983389at2759"/>
<dbReference type="PAN-GO" id="Q68D85">
    <property type="GO annotations" value="2 GO annotations based on evolutionary models"/>
</dbReference>
<dbReference type="PhylomeDB" id="Q68D85"/>
<dbReference type="TreeFam" id="TF331083"/>
<dbReference type="PathwayCommons" id="Q68D85"/>
<dbReference type="Reactome" id="R-HSA-198933">
    <property type="pathway name" value="Immunoregulatory interactions between a Lymphoid and a non-Lymphoid cell"/>
</dbReference>
<dbReference type="SignaLink" id="Q68D85"/>
<dbReference type="BioGRID-ORCS" id="374383">
    <property type="hits" value="17 hits in 1153 CRISPR screens"/>
</dbReference>
<dbReference type="EvolutionaryTrace" id="Q68D85"/>
<dbReference type="GenomeRNAi" id="374383"/>
<dbReference type="Pharos" id="Q68D85">
    <property type="development level" value="Tbio"/>
</dbReference>
<dbReference type="PRO" id="PR:Q68D85"/>
<dbReference type="Proteomes" id="UP000005640">
    <property type="component" value="Chromosome 11"/>
</dbReference>
<dbReference type="RNAct" id="Q68D85">
    <property type="molecule type" value="protein"/>
</dbReference>
<dbReference type="Bgee" id="ENSG00000188211">
    <property type="expression patterns" value="Expressed in cerebellar vermis and 101 other cell types or tissues"/>
</dbReference>
<dbReference type="GO" id="GO:0005886">
    <property type="term" value="C:plasma membrane"/>
    <property type="evidence" value="ECO:0000314"/>
    <property type="project" value="UniProt"/>
</dbReference>
<dbReference type="GO" id="GO:0048018">
    <property type="term" value="F:receptor ligand activity"/>
    <property type="evidence" value="ECO:0000314"/>
    <property type="project" value="UniProt"/>
</dbReference>
<dbReference type="GO" id="GO:0051132">
    <property type="term" value="P:NK T cell activation"/>
    <property type="evidence" value="ECO:0000314"/>
    <property type="project" value="UniProt"/>
</dbReference>
<dbReference type="CDD" id="cd00098">
    <property type="entry name" value="IgC1"/>
    <property type="match status" value="1"/>
</dbReference>
<dbReference type="CDD" id="cd20981">
    <property type="entry name" value="IgV_B7-H6"/>
    <property type="match status" value="1"/>
</dbReference>
<dbReference type="FunFam" id="1.10.150.180:FF:000002">
    <property type="entry name" value="Natural cytotoxicity triggering receptor 3 ligand 1"/>
    <property type="match status" value="1"/>
</dbReference>
<dbReference type="FunFam" id="2.60.40.10:FF:002733">
    <property type="entry name" value="Natural cytotoxicity triggering receptor 3 ligand 1"/>
    <property type="match status" value="1"/>
</dbReference>
<dbReference type="Gene3D" id="1.10.150.180">
    <property type="entry name" value="Gamma-retroviral matrix domain"/>
    <property type="match status" value="1"/>
</dbReference>
<dbReference type="Gene3D" id="2.60.40.10">
    <property type="entry name" value="Immunoglobulins"/>
    <property type="match status" value="2"/>
</dbReference>
<dbReference type="InterPro" id="IPR036946">
    <property type="entry name" value="G_retro_matrix_sf"/>
</dbReference>
<dbReference type="InterPro" id="IPR007110">
    <property type="entry name" value="Ig-like_dom"/>
</dbReference>
<dbReference type="InterPro" id="IPR036179">
    <property type="entry name" value="Ig-like_dom_sf"/>
</dbReference>
<dbReference type="InterPro" id="IPR013783">
    <property type="entry name" value="Ig-like_fold"/>
</dbReference>
<dbReference type="InterPro" id="IPR003006">
    <property type="entry name" value="Ig/MHC_CS"/>
</dbReference>
<dbReference type="InterPro" id="IPR003597">
    <property type="entry name" value="Ig_C1-set"/>
</dbReference>
<dbReference type="InterPro" id="IPR003599">
    <property type="entry name" value="Ig_sub"/>
</dbReference>
<dbReference type="InterPro" id="IPR050462">
    <property type="entry name" value="Retroviral_Gag-Pol_poly"/>
</dbReference>
<dbReference type="InterPro" id="IPR010999">
    <property type="entry name" value="Retrovr_matrix"/>
</dbReference>
<dbReference type="PANTHER" id="PTHR33166">
    <property type="entry name" value="GAG_P30 DOMAIN-CONTAINING PROTEIN"/>
    <property type="match status" value="1"/>
</dbReference>
<dbReference type="Pfam" id="PF07654">
    <property type="entry name" value="C1-set"/>
    <property type="match status" value="1"/>
</dbReference>
<dbReference type="SMART" id="SM00409">
    <property type="entry name" value="IG"/>
    <property type="match status" value="1"/>
</dbReference>
<dbReference type="SMART" id="SM00407">
    <property type="entry name" value="IGc1"/>
    <property type="match status" value="1"/>
</dbReference>
<dbReference type="SUPFAM" id="SSF48726">
    <property type="entry name" value="Immunoglobulin"/>
    <property type="match status" value="2"/>
</dbReference>
<dbReference type="SUPFAM" id="SSF47836">
    <property type="entry name" value="Retroviral matrix proteins"/>
    <property type="match status" value="1"/>
</dbReference>
<dbReference type="PROSITE" id="PS50835">
    <property type="entry name" value="IG_LIKE"/>
    <property type="match status" value="2"/>
</dbReference>
<dbReference type="PROSITE" id="PS00290">
    <property type="entry name" value="IG_MHC"/>
    <property type="match status" value="1"/>
</dbReference>
<proteinExistence type="evidence at protein level"/>
<feature type="signal peptide" evidence="1">
    <location>
        <begin position="1"/>
        <end position="24"/>
    </location>
</feature>
<feature type="chain" id="PRO_0000390564" description="Natural cytotoxicity triggering receptor 3 ligand 1">
    <location>
        <begin position="25"/>
        <end position="454"/>
    </location>
</feature>
<feature type="topological domain" description="Extracellular" evidence="1">
    <location>
        <begin position="25"/>
        <end position="262"/>
    </location>
</feature>
<feature type="transmembrane region" description="Helical" evidence="1">
    <location>
        <begin position="263"/>
        <end position="283"/>
    </location>
</feature>
<feature type="topological domain" description="Cytoplasmic" evidence="1">
    <location>
        <begin position="284"/>
        <end position="454"/>
    </location>
</feature>
<feature type="domain" description="Ig-like V-type">
    <location>
        <begin position="27"/>
        <end position="138"/>
    </location>
</feature>
<feature type="domain" description="Ig-like C1-type">
    <location>
        <begin position="143"/>
        <end position="244"/>
    </location>
</feature>
<feature type="region of interest" description="Interaction with NCR3" evidence="4">
    <location>
        <begin position="59"/>
        <end position="62"/>
    </location>
</feature>
<feature type="region of interest" description="Interaction with NCR3" evidence="4">
    <location>
        <begin position="127"/>
        <end position="130"/>
    </location>
</feature>
<feature type="region of interest" description="Retroviral-Gag-like">
    <location>
        <begin position="291"/>
        <end position="429"/>
    </location>
</feature>
<feature type="region of interest" description="Disordered" evidence="3">
    <location>
        <begin position="395"/>
        <end position="454"/>
    </location>
</feature>
<feature type="compositionally biased region" description="Basic and acidic residues" evidence="3">
    <location>
        <begin position="397"/>
        <end position="416"/>
    </location>
</feature>
<feature type="compositionally biased region" description="Low complexity" evidence="3">
    <location>
        <begin position="435"/>
        <end position="454"/>
    </location>
</feature>
<feature type="glycosylation site" description="N-linked (GlcNAc...) asparagine" evidence="5">
    <location>
        <position position="43"/>
    </location>
</feature>
<feature type="glycosylation site" description="N-linked (GlcNAc...) asparagine" evidence="5">
    <location>
        <position position="57"/>
    </location>
</feature>
<feature type="glycosylation site" description="N-linked (GlcNAc...) asparagine" evidence="1">
    <location>
        <position position="174"/>
    </location>
</feature>
<feature type="glycosylation site" description="N-linked (GlcNAc...) asparagine" evidence="5">
    <location>
        <position position="208"/>
    </location>
</feature>
<feature type="glycosylation site" description="N-linked (GlcNAc...) asparagine" evidence="1">
    <location>
        <position position="216"/>
    </location>
</feature>
<feature type="glycosylation site" description="N-linked (GlcNAc...) asparagine" evidence="5">
    <location>
        <position position="242"/>
    </location>
</feature>
<feature type="glycosylation site" description="N-linked (GlcNAc...) asparagine" evidence="1">
    <location>
        <position position="260"/>
    </location>
</feature>
<feature type="disulfide bond" evidence="2 5">
    <location>
        <begin position="48"/>
        <end position="122"/>
    </location>
</feature>
<feature type="disulfide bond" evidence="2 5">
    <location>
        <begin position="163"/>
        <end position="228"/>
    </location>
</feature>
<feature type="sequence conflict" description="In Ref. 1; CAD97811." evidence="6" ref="1">
    <original>I</original>
    <variation>V</variation>
    <location>
        <position position="37"/>
    </location>
</feature>
<feature type="sequence conflict" description="In Ref. 1; CAD97811." evidence="6" ref="1">
    <original>S</original>
    <variation>N</variation>
    <location>
        <position position="211"/>
    </location>
</feature>
<feature type="strand" evidence="8">
    <location>
        <begin position="26"/>
        <end position="29"/>
    </location>
</feature>
<feature type="strand" evidence="8">
    <location>
        <begin position="34"/>
        <end position="39"/>
    </location>
</feature>
<feature type="strand" evidence="8">
    <location>
        <begin position="44"/>
        <end position="46"/>
    </location>
</feature>
<feature type="strand" evidence="8">
    <location>
        <begin position="49"/>
        <end position="54"/>
    </location>
</feature>
<feature type="helix" evidence="7">
    <location>
        <begin position="58"/>
        <end position="60"/>
    </location>
</feature>
<feature type="strand" evidence="8">
    <location>
        <begin position="62"/>
        <end position="68"/>
    </location>
</feature>
<feature type="strand" evidence="7">
    <location>
        <begin position="70"/>
        <end position="73"/>
    </location>
</feature>
<feature type="strand" evidence="8">
    <location>
        <begin position="75"/>
        <end position="84"/>
    </location>
</feature>
<feature type="strand" evidence="8">
    <location>
        <begin position="86"/>
        <end position="90"/>
    </location>
</feature>
<feature type="helix" evidence="8">
    <location>
        <begin position="97"/>
        <end position="100"/>
    </location>
</feature>
<feature type="turn" evidence="8">
    <location>
        <begin position="101"/>
        <end position="103"/>
    </location>
</feature>
<feature type="strand" evidence="8">
    <location>
        <begin position="107"/>
        <end position="111"/>
    </location>
</feature>
<feature type="helix" evidence="8">
    <location>
        <begin position="114"/>
        <end position="116"/>
    </location>
</feature>
<feature type="strand" evidence="8">
    <location>
        <begin position="118"/>
        <end position="126"/>
    </location>
</feature>
<feature type="strand" evidence="8">
    <location>
        <begin position="129"/>
        <end position="141"/>
    </location>
</feature>
<feature type="strand" evidence="8">
    <location>
        <begin position="144"/>
        <end position="148"/>
    </location>
</feature>
<feature type="strand" evidence="10">
    <location>
        <begin position="156"/>
        <end position="158"/>
    </location>
</feature>
<feature type="strand" evidence="8">
    <location>
        <begin position="160"/>
        <end position="171"/>
    </location>
</feature>
<feature type="strand" evidence="8">
    <location>
        <begin position="174"/>
        <end position="180"/>
    </location>
</feature>
<feature type="strand" evidence="8">
    <location>
        <begin position="182"/>
        <end position="184"/>
    </location>
</feature>
<feature type="strand" evidence="8">
    <location>
        <begin position="188"/>
        <end position="190"/>
    </location>
</feature>
<feature type="strand" evidence="8">
    <location>
        <begin position="194"/>
        <end position="201"/>
    </location>
</feature>
<feature type="strand" evidence="8">
    <location>
        <begin position="207"/>
        <end position="214"/>
    </location>
</feature>
<feature type="helix" evidence="9">
    <location>
        <begin position="217"/>
        <end position="219"/>
    </location>
</feature>
<feature type="strand" evidence="8">
    <location>
        <begin position="225"/>
        <end position="231"/>
    </location>
</feature>
<feature type="strand" evidence="8">
    <location>
        <begin position="239"/>
        <end position="243"/>
    </location>
</feature>
<accession>Q68D85</accession>
<accession>Q7Z3M6</accession>
<sequence>MTWRAAASTCAALLILLWALTTEGDLKVEMMAGGTQITPLNDNVTIFCNIFYSQPLNITSMGITWFWKSLTFDKEVKVFEFFGDHQEAFRPGAIVSPWRLKSGDASLRLPGIQLEEAGEYRCEVVVTPLKAQGTVQLEVVASPASRLLLDQVGMKENEDKYMCESSGFYPEAINITWEKQTQKFPHPIEISEDVITGPTIKNMDGTFNVTSCLKLNSSQEDPGTVYQCVVRHASLHTPLRSNFTLTAARHSLSETEKTDNFSIHWWPISFIGVGLVLLIVLIPWKKICNKSSSAYTPLKCILKHWNSFDTQTLKKEHLIFFCTRAWPSYQLQDGEAWPPEGSVNINTIQQLDVFCRQEGKWSEVPYVQAFFALRDNPDLCQCCRIDPALLTVTSGKSIDDNSTKSEKQTPREHSDAVPDAPILPVSPIWEPPPATTSTTPVLSSQPPTLLLPLQ</sequence>